<feature type="signal peptide" evidence="2">
    <location>
        <begin position="1"/>
        <end position="19"/>
    </location>
</feature>
<feature type="chain" id="PRO_0000032757" description="Mimecan">
    <location>
        <begin position="20"/>
        <end position="299"/>
    </location>
</feature>
<feature type="chain" id="PRO_0000032758" description="Corneal keratan sulfate proteoglycan 25 core protein">
    <location>
        <begin position="77"/>
        <end position="299"/>
    </location>
</feature>
<feature type="chain" id="PRO_0000032759" description="Osteoinductive factor" evidence="4">
    <location>
        <begin position="195"/>
        <end position="299"/>
    </location>
</feature>
<feature type="repeat" description="LRR 1">
    <location>
        <begin position="113"/>
        <end position="132"/>
    </location>
</feature>
<feature type="repeat" description="LRR 2">
    <location>
        <begin position="133"/>
        <end position="156"/>
    </location>
</feature>
<feature type="repeat" description="LRR 3">
    <location>
        <begin position="157"/>
        <end position="180"/>
    </location>
</feature>
<feature type="repeat" description="LRR 4">
    <location>
        <begin position="181"/>
        <end position="200"/>
    </location>
</feature>
<feature type="repeat" description="LRR 5">
    <location>
        <begin position="201"/>
        <end position="226"/>
    </location>
</feature>
<feature type="repeat" description="LRR 6">
    <location>
        <begin position="227"/>
        <end position="247"/>
    </location>
</feature>
<feature type="repeat" description="LRR 7">
    <location>
        <begin position="248"/>
        <end position="278"/>
    </location>
</feature>
<feature type="glycosylation site" description="N-linked (GlcNAc...) (keratan sulfate) asparagine" evidence="2">
    <location>
        <position position="89"/>
    </location>
</feature>
<feature type="glycosylation site" description="N-linked (GlcNAc...) (keratan sulfate) asparagine" evidence="2">
    <location>
        <position position="215"/>
    </location>
</feature>
<feature type="glycosylation site" description="N-linked (GlcNAc...) asparagine" evidence="4">
    <location>
        <position position="246"/>
    </location>
</feature>
<feature type="glycosylation site" description="N-linked (GlcNAc...) (keratan sulfate) asparagine" evidence="4">
    <location>
        <position position="259"/>
    </location>
</feature>
<feature type="disulfide bond" evidence="4">
    <location>
        <begin position="256"/>
        <end position="289"/>
    </location>
</feature>
<feature type="sequence conflict" description="In Ref. 1; AAA30670." evidence="7" ref="1">
    <original>T</original>
    <variation>N</variation>
    <location>
        <position position="79"/>
    </location>
</feature>
<feature type="sequence conflict" description="In Ref. 2; AAB70264 and 3; AAD40387." evidence="7" ref="2 3">
    <original>E</original>
    <variation>G</variation>
    <location>
        <position position="121"/>
    </location>
</feature>
<gene>
    <name type="primary">OGN</name>
    <name type="synonym">OIF</name>
</gene>
<reference key="1">
    <citation type="journal article" date="1990" name="DNA Cell Biol.">
        <title>Molecular cloning of a novel bone-forming compound: osteoinductive factor.</title>
        <authorList>
            <person name="Madisen L."/>
            <person name="Neubauer M."/>
            <person name="Plowman G."/>
            <person name="Rosen D.M."/>
            <person name="Segarini P.R."/>
            <person name="Dasch J.R."/>
            <person name="Thompson A.Y."/>
            <person name="Ziman J."/>
            <person name="Bentz H."/>
            <person name="Purchio A.F."/>
        </authorList>
    </citation>
    <scope>NUCLEOTIDE SEQUENCE [MRNA]</scope>
</reference>
<reference key="2">
    <citation type="journal article" date="1997" name="J. Biol. Chem.">
        <title>Mimecan, the 25-kDa corneal keratan sulfate proteoglycan, is a product of the gene producing osteoglycin.</title>
        <authorList>
            <person name="Funderburgh J.L."/>
            <person name="Corpuz L.M."/>
            <person name="Roth M.R."/>
            <person name="Funderburgh M.L."/>
            <person name="Tasheva E.S."/>
            <person name="Conrad G.W."/>
        </authorList>
    </citation>
    <scope>NUCLEOTIDE SEQUENCE [MRNA]</scope>
    <scope>TISSUE SPECIFICITY</scope>
    <scope>GLYCOSYLATION</scope>
    <source>
        <tissue>Cornea</tissue>
    </source>
</reference>
<reference key="3">
    <citation type="journal article" date="1999" name="J. Biol. Chem.">
        <title>The bovine mimecan gene. Molecular cloning and characterization of two major RNA transcripts generated by alternative use of two splice acceptor sites in the third exon.</title>
        <authorList>
            <person name="Tasheva E.S."/>
            <person name="Funderburgh M.L."/>
            <person name="McReynolds J."/>
            <person name="Funderburgh J.L."/>
            <person name="Conrad G.W."/>
        </authorList>
    </citation>
    <scope>NUCLEOTIDE SEQUENCE [GENOMIC DNA]</scope>
</reference>
<reference key="4">
    <citation type="submission" date="2007-05" db="EMBL/GenBank/DDBJ databases">
        <authorList>
            <person name="Harhay G.P."/>
            <person name="Sonstegard T.S."/>
            <person name="Van Tassell C.P."/>
            <person name="Clawson M.L."/>
            <person name="Heaton M.P."/>
            <person name="Keele J.W."/>
            <person name="Snelling W.M."/>
            <person name="Weidmann R.T."/>
            <person name="Smith T.P.L."/>
        </authorList>
    </citation>
    <scope>NUCLEOTIDE SEQUENCE [LARGE SCALE MRNA]</scope>
</reference>
<reference key="5">
    <citation type="journal article" date="1990" name="J. Biol. Chem.">
        <title>Isoforms of corneal keratan sulfate proteoglycan.</title>
        <authorList>
            <person name="Funderburgh J.L."/>
            <person name="Conrad G.W."/>
        </authorList>
    </citation>
    <scope>PROTEIN SEQUENCE OF 77-89</scope>
    <scope>GLYCOSYLATION</scope>
</reference>
<reference key="6">
    <citation type="journal article" date="1990" name="J. Biol. Chem.">
        <title>Amino acid sequence of bovine osteoinductive factor.</title>
        <authorList>
            <person name="Bentz H."/>
            <person name="Chang R.-J."/>
            <person name="Thompson A.Y."/>
            <person name="Glaser C.B."/>
            <person name="Rosen D.M."/>
        </authorList>
    </citation>
    <scope>PROTEIN SEQUENCE OF 195-299</scope>
    <scope>GLYCOSYLATION AT ASN-246 AND ASN-259</scope>
    <scope>DISULFIDE BOND</scope>
    <source>
        <tissue>Brain</tissue>
    </source>
</reference>
<reference key="7">
    <citation type="journal article" date="1989" name="J. Biol. Chem.">
        <title>Purification and characterization of a unique osteoinductive factor from bovine bone.</title>
        <authorList>
            <person name="Bentz H."/>
            <person name="Nathan R.M."/>
            <person name="Rosen D.M."/>
            <person name="Armstrong R.M."/>
            <person name="Thompson A.Y."/>
            <person name="Segarini P.R."/>
            <person name="Mathews M.C."/>
            <person name="Dasch J.R."/>
            <person name="Piez K.A."/>
            <person name="Seyedin S.M."/>
        </authorList>
    </citation>
    <scope>PROTEIN SEQUENCE OF 195-227</scope>
    <scope>FUNCTION</scope>
    <source>
        <tissue>Brain</tissue>
    </source>
</reference>
<accession>P19879</accession>
<accession>A5D9E8</accession>
<accession>O18818</accession>
<protein>
    <recommendedName>
        <fullName>Mimecan</fullName>
    </recommendedName>
    <alternativeName>
        <fullName>Osteoglycin</fullName>
    </alternativeName>
    <component>
        <recommendedName>
            <fullName>Corneal keratan sulfate proteoglycan 25 core protein</fullName>
            <shortName>KSPG25 protein</shortName>
        </recommendedName>
    </component>
    <component>
        <recommendedName>
            <fullName>Osteoinductive factor</fullName>
            <shortName>OIF</shortName>
        </recommendedName>
    </component>
</protein>
<name>MIME_BOVIN</name>
<keyword id="KW-0903">Direct protein sequencing</keyword>
<keyword id="KW-1015">Disulfide bond</keyword>
<keyword id="KW-0272">Extracellular matrix</keyword>
<keyword id="KW-0325">Glycoprotein</keyword>
<keyword id="KW-0339">Growth factor</keyword>
<keyword id="KW-0433">Leucine-rich repeat</keyword>
<keyword id="KW-0654">Proteoglycan</keyword>
<keyword id="KW-1185">Reference proteome</keyword>
<keyword id="KW-0677">Repeat</keyword>
<keyword id="KW-0964">Secreted</keyword>
<keyword id="KW-0732">Signal</keyword>
<dbReference type="EMBL" id="M37974">
    <property type="protein sequence ID" value="AAA30670.1"/>
    <property type="molecule type" value="mRNA"/>
</dbReference>
<dbReference type="EMBL" id="AF017339">
    <property type="protein sequence ID" value="AAB70264.1"/>
    <property type="molecule type" value="mRNA"/>
</dbReference>
<dbReference type="EMBL" id="AF105150">
    <property type="protein sequence ID" value="AAD40387.1"/>
    <property type="molecule type" value="Genomic_DNA"/>
</dbReference>
<dbReference type="EMBL" id="BT030567">
    <property type="protein sequence ID" value="ABQ13007.1"/>
    <property type="molecule type" value="mRNA"/>
</dbReference>
<dbReference type="PIR" id="A35272">
    <property type="entry name" value="A35272"/>
</dbReference>
<dbReference type="RefSeq" id="NP_776371.1">
    <property type="nucleotide sequence ID" value="NM_173946.2"/>
</dbReference>
<dbReference type="SMR" id="P19879"/>
<dbReference type="FunCoup" id="P19879">
    <property type="interactions" value="260"/>
</dbReference>
<dbReference type="STRING" id="9913.ENSBTAP00000015694"/>
<dbReference type="GlyCosmos" id="P19879">
    <property type="glycosylation" value="2 sites, No reported glycans"/>
</dbReference>
<dbReference type="GlyGen" id="P19879">
    <property type="glycosylation" value="4 sites"/>
</dbReference>
<dbReference type="iPTMnet" id="P19879"/>
<dbReference type="PaxDb" id="9913-ENSBTAP00000055245"/>
<dbReference type="PeptideAtlas" id="P19879"/>
<dbReference type="Ensembl" id="ENSBTAT00000015694.5">
    <property type="protein sequence ID" value="ENSBTAP00000015694.3"/>
    <property type="gene ID" value="ENSBTAG00000011824.6"/>
</dbReference>
<dbReference type="GeneID" id="280884"/>
<dbReference type="KEGG" id="bta:280884"/>
<dbReference type="CTD" id="4969"/>
<dbReference type="VEuPathDB" id="HostDB:ENSBTAG00000011824"/>
<dbReference type="VGNC" id="VGNC:32414">
    <property type="gene designation" value="OGN"/>
</dbReference>
<dbReference type="eggNOG" id="KOG0619">
    <property type="taxonomic scope" value="Eukaryota"/>
</dbReference>
<dbReference type="GeneTree" id="ENSGT00940000157238"/>
<dbReference type="HOGENOM" id="CLU_067583_1_0_1"/>
<dbReference type="InParanoid" id="P19879"/>
<dbReference type="OMA" id="RIIHLQF"/>
<dbReference type="OrthoDB" id="7451790at2759"/>
<dbReference type="Reactome" id="R-BTA-2022854">
    <property type="pathway name" value="Keratan sulfate biosynthesis"/>
</dbReference>
<dbReference type="Reactome" id="R-BTA-2022857">
    <property type="pathway name" value="Keratan sulfate degradation"/>
</dbReference>
<dbReference type="Proteomes" id="UP000009136">
    <property type="component" value="Chromosome 8"/>
</dbReference>
<dbReference type="Bgee" id="ENSBTAG00000011824">
    <property type="expression patterns" value="Expressed in uterine cervix and 105 other cell types or tissues"/>
</dbReference>
<dbReference type="GO" id="GO:0031012">
    <property type="term" value="C:extracellular matrix"/>
    <property type="evidence" value="ECO:0000318"/>
    <property type="project" value="GO_Central"/>
</dbReference>
<dbReference type="GO" id="GO:0005576">
    <property type="term" value="C:extracellular region"/>
    <property type="evidence" value="ECO:0007669"/>
    <property type="project" value="UniProtKB-KW"/>
</dbReference>
<dbReference type="GO" id="GO:0008083">
    <property type="term" value="F:growth factor activity"/>
    <property type="evidence" value="ECO:0007669"/>
    <property type="project" value="UniProtKB-KW"/>
</dbReference>
<dbReference type="GO" id="GO:0061975">
    <property type="term" value="P:articular cartilage development"/>
    <property type="evidence" value="ECO:0000318"/>
    <property type="project" value="GO_Central"/>
</dbReference>
<dbReference type="GO" id="GO:0060348">
    <property type="term" value="P:bone development"/>
    <property type="evidence" value="ECO:0000318"/>
    <property type="project" value="GO_Central"/>
</dbReference>
<dbReference type="FunFam" id="3.80.10.10:FF:000335">
    <property type="entry name" value="mimecan"/>
    <property type="match status" value="1"/>
</dbReference>
<dbReference type="Gene3D" id="3.80.10.10">
    <property type="entry name" value="Ribonuclease Inhibitor"/>
    <property type="match status" value="1"/>
</dbReference>
<dbReference type="InterPro" id="IPR001611">
    <property type="entry name" value="Leu-rich_rpt"/>
</dbReference>
<dbReference type="InterPro" id="IPR003591">
    <property type="entry name" value="Leu-rich_rpt_typical-subtyp"/>
</dbReference>
<dbReference type="InterPro" id="IPR032675">
    <property type="entry name" value="LRR_dom_sf"/>
</dbReference>
<dbReference type="InterPro" id="IPR043547">
    <property type="entry name" value="Mimecan/Epiphycan/Opticin"/>
</dbReference>
<dbReference type="PANTHER" id="PTHR46269">
    <property type="entry name" value="EPIPHYCAN-RELATED"/>
    <property type="match status" value="1"/>
</dbReference>
<dbReference type="PANTHER" id="PTHR46269:SF1">
    <property type="entry name" value="MIMECAN"/>
    <property type="match status" value="1"/>
</dbReference>
<dbReference type="Pfam" id="PF13855">
    <property type="entry name" value="LRR_8"/>
    <property type="match status" value="1"/>
</dbReference>
<dbReference type="SMART" id="SM00369">
    <property type="entry name" value="LRR_TYP"/>
    <property type="match status" value="4"/>
</dbReference>
<dbReference type="SUPFAM" id="SSF52058">
    <property type="entry name" value="L domain-like"/>
    <property type="match status" value="1"/>
</dbReference>
<dbReference type="PROSITE" id="PS51450">
    <property type="entry name" value="LRR"/>
    <property type="match status" value="4"/>
</dbReference>
<proteinExistence type="evidence at protein level"/>
<evidence type="ECO:0000250" key="1">
    <source>
        <dbReference type="UniProtKB" id="Q8MJF1"/>
    </source>
</evidence>
<evidence type="ECO:0000255" key="2"/>
<evidence type="ECO:0000269" key="3">
    <source>
    </source>
</evidence>
<evidence type="ECO:0000269" key="4">
    <source>
    </source>
</evidence>
<evidence type="ECO:0000269" key="5">
    <source>
    </source>
</evidence>
<evidence type="ECO:0000269" key="6">
    <source>
    </source>
</evidence>
<evidence type="ECO:0000305" key="7"/>
<comment type="function">
    <text evidence="5">Induces bone formation in conjunction with TGF-beta-1 or TGF-beta-2.</text>
</comment>
<comment type="subcellular location">
    <subcellularLocation>
        <location evidence="1">Secreted</location>
        <location evidence="1">Extracellular space</location>
        <location evidence="1">Extracellular matrix</location>
    </subcellularLocation>
</comment>
<comment type="tissue specificity">
    <text evidence="6">Bone and cornea.</text>
</comment>
<comment type="PTM">
    <text evidence="3 6">Contains keratan sulfate (PubMed:2139877, PubMed:9346963). Keratan sulfate attachment is observed in the cornea but the protein also exists in other tissues without keratan sulfate (PubMed:9346963).</text>
</comment>
<comment type="PTM">
    <text>The 12 kDa OIF in bone and the 25 kDa KSPG25 protein in cornea are probably proteolytic fragments.</text>
</comment>
<comment type="similarity">
    <text evidence="7">Belongs to the small leucine-rich proteoglycan (SLRP) family. SLRP class III subfamily.</text>
</comment>
<organism>
    <name type="scientific">Bos taurus</name>
    <name type="common">Bovine</name>
    <dbReference type="NCBI Taxonomy" id="9913"/>
    <lineage>
        <taxon>Eukaryota</taxon>
        <taxon>Metazoa</taxon>
        <taxon>Chordata</taxon>
        <taxon>Craniata</taxon>
        <taxon>Vertebrata</taxon>
        <taxon>Euteleostomi</taxon>
        <taxon>Mammalia</taxon>
        <taxon>Eutheria</taxon>
        <taxon>Laurasiatheria</taxon>
        <taxon>Artiodactyla</taxon>
        <taxon>Ruminantia</taxon>
        <taxon>Pecora</taxon>
        <taxon>Bovidae</taxon>
        <taxon>Bovinae</taxon>
        <taxon>Bos</taxon>
    </lineage>
</organism>
<sequence>MKTLQSTLLLFLFVPLIKPAPPSQQDSRIIYDYGTDNLEETFFSQDYEDKYLDGKSTKEKETMIIVPDEKSFQLQKDETITPLPPKKENDEMPTCLLCVCLSGSVYCEEVDIDAVPPLPKESAYLYARFNKIKKLTAKDFADIPNLRRLDFTGNLIEDIEDGTFSKLSLLEELTLAENQLLKLPVLPPKLTLFNAKYNKIKSRGIKANTFKKLHNLSFLYLDHNALESVPLNLPESLRVIHLQFNNITSITDDTFCKANDTSYIRDRIEEIRLEGNPVILGKHPNSFICLKRLPIGSYI</sequence>